<evidence type="ECO:0000255" key="1">
    <source>
        <dbReference type="HAMAP-Rule" id="MF_00144"/>
    </source>
</evidence>
<evidence type="ECO:0000305" key="2"/>
<accession>Q1JJD5</accession>
<reference key="1">
    <citation type="journal article" date="2006" name="Proc. Natl. Acad. Sci. U.S.A.">
        <title>Molecular genetic anatomy of inter- and intraserotype variation in the human bacterial pathogen group A Streptococcus.</title>
        <authorList>
            <person name="Beres S.B."/>
            <person name="Richter E.W."/>
            <person name="Nagiec M.J."/>
            <person name="Sumby P."/>
            <person name="Porcella S.F."/>
            <person name="DeLeo F.R."/>
            <person name="Musser J.M."/>
        </authorList>
    </citation>
    <scope>NUCLEOTIDE SEQUENCE [LARGE SCALE GENOMIC DNA]</scope>
    <source>
        <strain>MGAS9429</strain>
    </source>
</reference>
<comment type="function">
    <text evidence="1">Catalyzes the 2-thiolation of uridine at the wobble position (U34) of tRNA, leading to the formation of s(2)U34.</text>
</comment>
<comment type="catalytic activity">
    <reaction evidence="1">
        <text>S-sulfanyl-L-cysteinyl-[protein] + uridine(34) in tRNA + AH2 + ATP = 2-thiouridine(34) in tRNA + L-cysteinyl-[protein] + A + AMP + diphosphate + H(+)</text>
        <dbReference type="Rhea" id="RHEA:47032"/>
        <dbReference type="Rhea" id="RHEA-COMP:10131"/>
        <dbReference type="Rhea" id="RHEA-COMP:11726"/>
        <dbReference type="Rhea" id="RHEA-COMP:11727"/>
        <dbReference type="Rhea" id="RHEA-COMP:11728"/>
        <dbReference type="ChEBI" id="CHEBI:13193"/>
        <dbReference type="ChEBI" id="CHEBI:15378"/>
        <dbReference type="ChEBI" id="CHEBI:17499"/>
        <dbReference type="ChEBI" id="CHEBI:29950"/>
        <dbReference type="ChEBI" id="CHEBI:30616"/>
        <dbReference type="ChEBI" id="CHEBI:33019"/>
        <dbReference type="ChEBI" id="CHEBI:61963"/>
        <dbReference type="ChEBI" id="CHEBI:65315"/>
        <dbReference type="ChEBI" id="CHEBI:87170"/>
        <dbReference type="ChEBI" id="CHEBI:456215"/>
        <dbReference type="EC" id="2.8.1.13"/>
    </reaction>
</comment>
<comment type="subcellular location">
    <subcellularLocation>
        <location evidence="1">Cytoplasm</location>
    </subcellularLocation>
</comment>
<comment type="similarity">
    <text evidence="1">Belongs to the MnmA/TRMU family.</text>
</comment>
<comment type="sequence caution" evidence="2">
    <conflict type="erroneous initiation">
        <sequence resource="EMBL-CDS" id="ABF33038"/>
    </conflict>
</comment>
<name>MNMA_STRPC</name>
<proteinExistence type="inferred from homology"/>
<dbReference type="EC" id="2.8.1.13" evidence="1"/>
<dbReference type="EMBL" id="CP000259">
    <property type="protein sequence ID" value="ABF33038.1"/>
    <property type="status" value="ALT_INIT"/>
    <property type="molecule type" value="Genomic_DNA"/>
</dbReference>
<dbReference type="RefSeq" id="WP_002991416.1">
    <property type="nucleotide sequence ID" value="NC_008021.1"/>
</dbReference>
<dbReference type="SMR" id="Q1JJD5"/>
<dbReference type="KEGG" id="spk:MGAS9429_Spy1851"/>
<dbReference type="HOGENOM" id="CLU_035188_1_0_9"/>
<dbReference type="Proteomes" id="UP000002433">
    <property type="component" value="Chromosome"/>
</dbReference>
<dbReference type="GO" id="GO:0005737">
    <property type="term" value="C:cytoplasm"/>
    <property type="evidence" value="ECO:0007669"/>
    <property type="project" value="UniProtKB-SubCell"/>
</dbReference>
<dbReference type="GO" id="GO:0005524">
    <property type="term" value="F:ATP binding"/>
    <property type="evidence" value="ECO:0007669"/>
    <property type="project" value="UniProtKB-KW"/>
</dbReference>
<dbReference type="GO" id="GO:0000049">
    <property type="term" value="F:tRNA binding"/>
    <property type="evidence" value="ECO:0007669"/>
    <property type="project" value="UniProtKB-KW"/>
</dbReference>
<dbReference type="GO" id="GO:0103016">
    <property type="term" value="F:tRNA-uridine 2-sulfurtransferase activity"/>
    <property type="evidence" value="ECO:0007669"/>
    <property type="project" value="UniProtKB-EC"/>
</dbReference>
<dbReference type="GO" id="GO:0002143">
    <property type="term" value="P:tRNA wobble position uridine thiolation"/>
    <property type="evidence" value="ECO:0007669"/>
    <property type="project" value="TreeGrafter"/>
</dbReference>
<dbReference type="CDD" id="cd01998">
    <property type="entry name" value="MnmA_TRMU-like"/>
    <property type="match status" value="1"/>
</dbReference>
<dbReference type="FunFam" id="2.30.30.280:FF:000001">
    <property type="entry name" value="tRNA-specific 2-thiouridylase MnmA"/>
    <property type="match status" value="1"/>
</dbReference>
<dbReference type="FunFam" id="2.40.30.10:FF:000023">
    <property type="entry name" value="tRNA-specific 2-thiouridylase MnmA"/>
    <property type="match status" value="1"/>
</dbReference>
<dbReference type="FunFam" id="3.40.50.620:FF:000004">
    <property type="entry name" value="tRNA-specific 2-thiouridylase MnmA"/>
    <property type="match status" value="1"/>
</dbReference>
<dbReference type="Gene3D" id="2.30.30.280">
    <property type="entry name" value="Adenine nucleotide alpha hydrolases-like domains"/>
    <property type="match status" value="1"/>
</dbReference>
<dbReference type="Gene3D" id="3.40.50.620">
    <property type="entry name" value="HUPs"/>
    <property type="match status" value="1"/>
</dbReference>
<dbReference type="Gene3D" id="2.40.30.10">
    <property type="entry name" value="Translation factors"/>
    <property type="match status" value="1"/>
</dbReference>
<dbReference type="HAMAP" id="MF_00144">
    <property type="entry name" value="tRNA_thiouridyl_MnmA"/>
    <property type="match status" value="1"/>
</dbReference>
<dbReference type="InterPro" id="IPR004506">
    <property type="entry name" value="MnmA-like"/>
</dbReference>
<dbReference type="InterPro" id="IPR046885">
    <property type="entry name" value="MnmA-like_C"/>
</dbReference>
<dbReference type="InterPro" id="IPR046884">
    <property type="entry name" value="MnmA-like_central"/>
</dbReference>
<dbReference type="InterPro" id="IPR023382">
    <property type="entry name" value="MnmA-like_central_sf"/>
</dbReference>
<dbReference type="InterPro" id="IPR014729">
    <property type="entry name" value="Rossmann-like_a/b/a_fold"/>
</dbReference>
<dbReference type="NCBIfam" id="NF001138">
    <property type="entry name" value="PRK00143.1"/>
    <property type="match status" value="1"/>
</dbReference>
<dbReference type="NCBIfam" id="TIGR00420">
    <property type="entry name" value="trmU"/>
    <property type="match status" value="1"/>
</dbReference>
<dbReference type="PANTHER" id="PTHR11933:SF5">
    <property type="entry name" value="MITOCHONDRIAL TRNA-SPECIFIC 2-THIOURIDYLASE 1"/>
    <property type="match status" value="1"/>
</dbReference>
<dbReference type="PANTHER" id="PTHR11933">
    <property type="entry name" value="TRNA 5-METHYLAMINOMETHYL-2-THIOURIDYLATE -METHYLTRANSFERASE"/>
    <property type="match status" value="1"/>
</dbReference>
<dbReference type="Pfam" id="PF03054">
    <property type="entry name" value="tRNA_Me_trans"/>
    <property type="match status" value="1"/>
</dbReference>
<dbReference type="Pfam" id="PF20258">
    <property type="entry name" value="tRNA_Me_trans_C"/>
    <property type="match status" value="1"/>
</dbReference>
<dbReference type="Pfam" id="PF20259">
    <property type="entry name" value="tRNA_Me_trans_M"/>
    <property type="match status" value="1"/>
</dbReference>
<dbReference type="SUPFAM" id="SSF52402">
    <property type="entry name" value="Adenine nucleotide alpha hydrolases-like"/>
    <property type="match status" value="1"/>
</dbReference>
<sequence>MTDNSKIRVVVGMSGGVDSSVTALLLKEQGYDVIGVFMKNWDDTDEFGVCTATEDYKDVAAVADQIGIPYYSVNFEKEYWDRVFEYFLAEYRAGRTPNPDVMCNKEIKFKAFLDYAMTLGADYVATGHYAQVKRDENGTVHMLRGADNGKDQTYFLSQLSQEQLQKTLFPLGHLQKSEVREIAERAGLATAKKKDSTGICFIGEKNFKQFLSQYLPAQKGRMMTIDGRDMGEHAGLMYYTIGQRGGLGIGGQHGGDNQPWFVVGKDLSQNILYVGQGFYHEALMSNSLDASVIHFTREMPEEFTFECTAKFRYRQPDSHVTVHVRGDKAEVVFAEPQRAITPGQAVVFYDGKECLGGGMIDMAYKNGQPCQYI</sequence>
<protein>
    <recommendedName>
        <fullName evidence="1">tRNA-specific 2-thiouridylase MnmA</fullName>
        <ecNumber evidence="1">2.8.1.13</ecNumber>
    </recommendedName>
</protein>
<gene>
    <name evidence="1" type="primary">mnmA</name>
    <name type="ordered locus">MGAS9429_Spy1851</name>
</gene>
<organism>
    <name type="scientific">Streptococcus pyogenes serotype M12 (strain MGAS9429)</name>
    <dbReference type="NCBI Taxonomy" id="370551"/>
    <lineage>
        <taxon>Bacteria</taxon>
        <taxon>Bacillati</taxon>
        <taxon>Bacillota</taxon>
        <taxon>Bacilli</taxon>
        <taxon>Lactobacillales</taxon>
        <taxon>Streptococcaceae</taxon>
        <taxon>Streptococcus</taxon>
    </lineage>
</organism>
<keyword id="KW-0067">ATP-binding</keyword>
<keyword id="KW-0963">Cytoplasm</keyword>
<keyword id="KW-1015">Disulfide bond</keyword>
<keyword id="KW-0547">Nucleotide-binding</keyword>
<keyword id="KW-0694">RNA-binding</keyword>
<keyword id="KW-0808">Transferase</keyword>
<keyword id="KW-0819">tRNA processing</keyword>
<keyword id="KW-0820">tRNA-binding</keyword>
<feature type="chain" id="PRO_0000349812" description="tRNA-specific 2-thiouridylase MnmA">
    <location>
        <begin position="1"/>
        <end position="373"/>
    </location>
</feature>
<feature type="region of interest" description="Interaction with target base in tRNA" evidence="1">
    <location>
        <begin position="98"/>
        <end position="100"/>
    </location>
</feature>
<feature type="region of interest" description="Interaction with tRNA" evidence="1">
    <location>
        <begin position="150"/>
        <end position="152"/>
    </location>
</feature>
<feature type="region of interest" description="Interaction with tRNA" evidence="1">
    <location>
        <begin position="312"/>
        <end position="313"/>
    </location>
</feature>
<feature type="active site" description="Nucleophile" evidence="1">
    <location>
        <position position="103"/>
    </location>
</feature>
<feature type="active site" description="Cysteine persulfide intermediate" evidence="1">
    <location>
        <position position="200"/>
    </location>
</feature>
<feature type="binding site" evidence="1">
    <location>
        <begin position="12"/>
        <end position="19"/>
    </location>
    <ligand>
        <name>ATP</name>
        <dbReference type="ChEBI" id="CHEBI:30616"/>
    </ligand>
</feature>
<feature type="binding site" evidence="1">
    <location>
        <position position="38"/>
    </location>
    <ligand>
        <name>ATP</name>
        <dbReference type="ChEBI" id="CHEBI:30616"/>
    </ligand>
</feature>
<feature type="binding site" evidence="1">
    <location>
        <position position="127"/>
    </location>
    <ligand>
        <name>ATP</name>
        <dbReference type="ChEBI" id="CHEBI:30616"/>
    </ligand>
</feature>
<feature type="site" description="Interaction with tRNA" evidence="1">
    <location>
        <position position="128"/>
    </location>
</feature>
<feature type="site" description="Interaction with tRNA" evidence="1">
    <location>
        <position position="344"/>
    </location>
</feature>
<feature type="disulfide bond" description="Alternate" evidence="1">
    <location>
        <begin position="103"/>
        <end position="200"/>
    </location>
</feature>